<keyword id="KW-0325">Glycoprotein</keyword>
<keyword id="KW-0378">Hydrolase</keyword>
<keyword id="KW-0645">Protease</keyword>
<keyword id="KW-1185">Reference proteome</keyword>
<keyword id="KW-0720">Serine protease</keyword>
<keyword id="KW-0732">Signal</keyword>
<sequence length="565" mass="62838">MRWFLVLLLVALVSVEASRRSRLFKKLYQKASNYDAAPSNVQTVWYKNMKLDHFTWGDTRTFDMRVMWNNTFYKPGGPIFFYTGNEGGLESFVTATGMMFDLAPMFNASIIFAEHRFYGQTQPFGNQSYASLANVGYLTSEQALADYAELLTELKRDNNQFKMTFPAATQVISFGGSYGGMLSAWFRQKYPHIVKGAWAGSAPLIYMNGGGVDPGAFDHITSRTYIDNGCNRFILANAWNATLNLSSTDAGRQWLNNNTVFKLDPRTKIRNQTDGWNLNAYLREAIEYMAMVDYPYPTGFLEPLPAWPVTVACGYMNANGTSFSDKDLVKAVANAANIYYNYNRDPNFTYCIDFSICGDQGTGGLGGDELGWPWQECSEIIMAMCASGGSNDVFWNECGKDIYQTLQQGCVSIFKSMGWTPKNWNIDAVKTLYGYDLSGSSNLILTQGHLDPWSGGGYKVDQNNAARGIYVLEIPGSAHHLDLRQPNTCDPNTVTNARFQIIQILKCWVDPNCNTIPTISPLPSISIPNGDCKDVVGGYPWGQTTGATVSNSFILAILASLYAMF</sequence>
<organism>
    <name type="scientific">Caenorhabditis elegans</name>
    <dbReference type="NCBI Taxonomy" id="6239"/>
    <lineage>
        <taxon>Eukaryota</taxon>
        <taxon>Metazoa</taxon>
        <taxon>Ecdysozoa</taxon>
        <taxon>Nematoda</taxon>
        <taxon>Chromadorea</taxon>
        <taxon>Rhabditida</taxon>
        <taxon>Rhabditina</taxon>
        <taxon>Rhabditomorpha</taxon>
        <taxon>Rhabditoidea</taxon>
        <taxon>Rhabditidae</taxon>
        <taxon>Peloderinae</taxon>
        <taxon>Caenorhabditis</taxon>
    </lineage>
</organism>
<feature type="signal peptide" evidence="1">
    <location>
        <begin position="1"/>
        <end position="17"/>
    </location>
</feature>
<feature type="chain" id="PRO_0000027323" description="Putative serine protease pcp-1">
    <location>
        <begin position="18"/>
        <end position="565"/>
    </location>
</feature>
<feature type="active site" description="Charge relay system" evidence="1">
    <location>
        <position position="177"/>
    </location>
</feature>
<feature type="active site" description="Charge relay system" evidence="1">
    <location>
        <position position="451"/>
    </location>
</feature>
<feature type="active site" description="Charge relay system" evidence="1">
    <location>
        <position position="479"/>
    </location>
</feature>
<feature type="glycosylation site" description="N-linked (GlcNAc...) asparagine" evidence="1">
    <location>
        <position position="69"/>
    </location>
</feature>
<feature type="glycosylation site" description="N-linked (GlcNAc...) asparagine" evidence="1">
    <location>
        <position position="107"/>
    </location>
</feature>
<feature type="glycosylation site" description="N-linked (GlcNAc...) asparagine" evidence="1">
    <location>
        <position position="126"/>
    </location>
</feature>
<feature type="glycosylation site" description="N-linked (GlcNAc...) asparagine" evidence="1">
    <location>
        <position position="240"/>
    </location>
</feature>
<feature type="glycosylation site" description="N-linked (GlcNAc...) asparagine" evidence="1">
    <location>
        <position position="244"/>
    </location>
</feature>
<feature type="glycosylation site" description="N-linked (GlcNAc...) asparagine" evidence="2">
    <location>
        <position position="257"/>
    </location>
</feature>
<feature type="glycosylation site" description="N-linked (GlcNAc...) asparagine" evidence="1">
    <location>
        <position position="271"/>
    </location>
</feature>
<feature type="glycosylation site" description="N-linked (GlcNAc...) asparagine" evidence="1">
    <location>
        <position position="319"/>
    </location>
</feature>
<feature type="glycosylation site" description="N-linked (GlcNAc...) asparagine" evidence="1">
    <location>
        <position position="347"/>
    </location>
</feature>
<accession>P34610</accession>
<protein>
    <recommendedName>
        <fullName>Putative serine protease pcp-1</fullName>
        <ecNumber>3.4.-.-</ecNumber>
    </recommendedName>
</protein>
<comment type="similarity">
    <text evidence="3">Belongs to the peptidase S28 family.</text>
</comment>
<name>PCP1_CAEEL</name>
<evidence type="ECO:0000255" key="1"/>
<evidence type="ECO:0000269" key="2">
    <source>
    </source>
</evidence>
<evidence type="ECO:0000305" key="3"/>
<gene>
    <name type="primary">pcp-1</name>
    <name type="ORF">ZK112.1</name>
</gene>
<dbReference type="EC" id="3.4.-.-"/>
<dbReference type="EMBL" id="FO080308">
    <property type="protein sequence ID" value="CCD62762.1"/>
    <property type="molecule type" value="Genomic_DNA"/>
</dbReference>
<dbReference type="PIR" id="S44886">
    <property type="entry name" value="S44886"/>
</dbReference>
<dbReference type="RefSeq" id="NP_498688.1">
    <property type="nucleotide sequence ID" value="NM_066287.7"/>
</dbReference>
<dbReference type="SMR" id="P34610"/>
<dbReference type="BioGRID" id="41294">
    <property type="interactions" value="1"/>
</dbReference>
<dbReference type="FunCoup" id="P34610">
    <property type="interactions" value="210"/>
</dbReference>
<dbReference type="STRING" id="6239.ZK112.1.2"/>
<dbReference type="ESTHER" id="caeel-yog1">
    <property type="family name" value="Prolylcarboxypeptidase"/>
</dbReference>
<dbReference type="MEROPS" id="S28.A17"/>
<dbReference type="GlyCosmos" id="P34610">
    <property type="glycosylation" value="9 sites, No reported glycans"/>
</dbReference>
<dbReference type="iPTMnet" id="P34610"/>
<dbReference type="PaxDb" id="6239-ZK112.1"/>
<dbReference type="PeptideAtlas" id="P34610"/>
<dbReference type="EnsemblMetazoa" id="ZK112.1.1">
    <property type="protein sequence ID" value="ZK112.1.1"/>
    <property type="gene ID" value="WBGene00003956"/>
</dbReference>
<dbReference type="GeneID" id="176086"/>
<dbReference type="KEGG" id="cel:CELE_ZK112.1"/>
<dbReference type="UCSC" id="ZK112.1">
    <property type="organism name" value="c. elegans"/>
</dbReference>
<dbReference type="AGR" id="WB:WBGene00003956"/>
<dbReference type="CTD" id="176086"/>
<dbReference type="WormBase" id="ZK112.1">
    <property type="protein sequence ID" value="CE25679"/>
    <property type="gene ID" value="WBGene00003956"/>
    <property type="gene designation" value="pcp-1"/>
</dbReference>
<dbReference type="eggNOG" id="KOG2183">
    <property type="taxonomic scope" value="Eukaryota"/>
</dbReference>
<dbReference type="HOGENOM" id="CLU_020959_0_1_1"/>
<dbReference type="InParanoid" id="P34610"/>
<dbReference type="OMA" id="IMWDLAP"/>
<dbReference type="OrthoDB" id="2130629at2759"/>
<dbReference type="PhylomeDB" id="P34610"/>
<dbReference type="PRO" id="PR:P34610"/>
<dbReference type="Proteomes" id="UP000001940">
    <property type="component" value="Chromosome III"/>
</dbReference>
<dbReference type="Bgee" id="WBGene00003956">
    <property type="expression patterns" value="Expressed in larva and 3 other cell types or tissues"/>
</dbReference>
<dbReference type="GO" id="GO:0008239">
    <property type="term" value="F:dipeptidyl-peptidase activity"/>
    <property type="evidence" value="ECO:0000318"/>
    <property type="project" value="GO_Central"/>
</dbReference>
<dbReference type="GO" id="GO:0070008">
    <property type="term" value="F:serine-type exopeptidase activity"/>
    <property type="evidence" value="ECO:0007669"/>
    <property type="project" value="InterPro"/>
</dbReference>
<dbReference type="GO" id="GO:0006508">
    <property type="term" value="P:proteolysis"/>
    <property type="evidence" value="ECO:0007669"/>
    <property type="project" value="UniProtKB-KW"/>
</dbReference>
<dbReference type="FunFam" id="1.20.120.980:FF:000007">
    <property type="entry name" value="Predicted protein"/>
    <property type="match status" value="1"/>
</dbReference>
<dbReference type="Gene3D" id="3.40.50.1820">
    <property type="entry name" value="alpha/beta hydrolase"/>
    <property type="match status" value="1"/>
</dbReference>
<dbReference type="Gene3D" id="1.20.120.980">
    <property type="entry name" value="Serine carboxypeptidase S28, SKS domain"/>
    <property type="match status" value="1"/>
</dbReference>
<dbReference type="InterPro" id="IPR029058">
    <property type="entry name" value="AB_hydrolase_fold"/>
</dbReference>
<dbReference type="InterPro" id="IPR008758">
    <property type="entry name" value="Peptidase_S28"/>
</dbReference>
<dbReference type="InterPro" id="IPR042269">
    <property type="entry name" value="Ser_carbopepase_S28_SKS"/>
</dbReference>
<dbReference type="PANTHER" id="PTHR11010">
    <property type="entry name" value="PROTEASE S28 PRO-X CARBOXYPEPTIDASE-RELATED"/>
    <property type="match status" value="1"/>
</dbReference>
<dbReference type="PANTHER" id="PTHR11010:SF104">
    <property type="entry name" value="SERINE PROTEASE PCP-1-RELATED"/>
    <property type="match status" value="1"/>
</dbReference>
<dbReference type="Pfam" id="PF05577">
    <property type="entry name" value="Peptidase_S28"/>
    <property type="match status" value="1"/>
</dbReference>
<dbReference type="SUPFAM" id="SSF53474">
    <property type="entry name" value="alpha/beta-Hydrolases"/>
    <property type="match status" value="1"/>
</dbReference>
<reference key="1">
    <citation type="journal article" date="1994" name="Nature">
        <title>2.2 Mb of contiguous nucleotide sequence from chromosome III of C. elegans.</title>
        <authorList>
            <person name="Wilson R."/>
            <person name="Ainscough R."/>
            <person name="Anderson K."/>
            <person name="Baynes C."/>
            <person name="Berks M."/>
            <person name="Bonfield J."/>
            <person name="Burton J."/>
            <person name="Connell M."/>
            <person name="Copsey T."/>
            <person name="Cooper J."/>
            <person name="Coulson A."/>
            <person name="Craxton M."/>
            <person name="Dear S."/>
            <person name="Du Z."/>
            <person name="Durbin R."/>
            <person name="Favello A."/>
            <person name="Fraser A."/>
            <person name="Fulton L."/>
            <person name="Gardner A."/>
            <person name="Green P."/>
            <person name="Hawkins T."/>
            <person name="Hillier L."/>
            <person name="Jier M."/>
            <person name="Johnston L."/>
            <person name="Jones M."/>
            <person name="Kershaw J."/>
            <person name="Kirsten J."/>
            <person name="Laisster N."/>
            <person name="Latreille P."/>
            <person name="Lightning J."/>
            <person name="Lloyd C."/>
            <person name="Mortimore B."/>
            <person name="O'Callaghan M."/>
            <person name="Parsons J."/>
            <person name="Percy C."/>
            <person name="Rifken L."/>
            <person name="Roopra A."/>
            <person name="Saunders D."/>
            <person name="Shownkeen R."/>
            <person name="Sims M."/>
            <person name="Smaldon N."/>
            <person name="Smith A."/>
            <person name="Smith M."/>
            <person name="Sonnhammer E."/>
            <person name="Staden R."/>
            <person name="Sulston J."/>
            <person name="Thierry-Mieg J."/>
            <person name="Thomas K."/>
            <person name="Vaudin M."/>
            <person name="Vaughan K."/>
            <person name="Waterston R."/>
            <person name="Watson A."/>
            <person name="Weinstock L."/>
            <person name="Wilkinson-Sproat J."/>
            <person name="Wohldman P."/>
        </authorList>
    </citation>
    <scope>NUCLEOTIDE SEQUENCE [LARGE SCALE GENOMIC DNA]</scope>
    <source>
        <strain>Bristol N2</strain>
    </source>
</reference>
<reference key="2">
    <citation type="journal article" date="1998" name="Science">
        <title>Genome sequence of the nematode C. elegans: a platform for investigating biology.</title>
        <authorList>
            <consortium name="The C. elegans sequencing consortium"/>
        </authorList>
    </citation>
    <scope>NUCLEOTIDE SEQUENCE [LARGE SCALE GENOMIC DNA]</scope>
    <source>
        <strain>Bristol N2</strain>
    </source>
</reference>
<reference key="3">
    <citation type="journal article" date="2007" name="Mol. Cell. Proteomics">
        <title>Proteomics reveals N-linked glycoprotein diversity in Caenorhabditis elegans and suggests an atypical translocation mechanism for integral membrane proteins.</title>
        <authorList>
            <person name="Kaji H."/>
            <person name="Kamiie J."/>
            <person name="Kawakami H."/>
            <person name="Kido K."/>
            <person name="Yamauchi Y."/>
            <person name="Shinkawa T."/>
            <person name="Taoka M."/>
            <person name="Takahashi N."/>
            <person name="Isobe T."/>
        </authorList>
    </citation>
    <scope>GLYCOSYLATION [LARGE SCALE ANALYSIS] AT ASN-257</scope>
    <scope>IDENTIFICATION BY MASS SPECTROMETRY</scope>
    <source>
        <strain>Bristol N2</strain>
    </source>
</reference>
<proteinExistence type="evidence at protein level"/>